<feature type="chain" id="PRO_0000183436" description="Cytochrome c oxidase subunit 1">
    <location>
        <begin position="1"/>
        <end position="622"/>
    </location>
</feature>
<feature type="topological domain" description="Extracellular" evidence="2">
    <location>
        <begin position="1"/>
        <end position="27"/>
    </location>
</feature>
<feature type="transmembrane region" description="Helical" evidence="2">
    <location>
        <begin position="28"/>
        <end position="46"/>
    </location>
</feature>
<feature type="topological domain" description="Cytoplasmic" evidence="2">
    <location>
        <begin position="47"/>
        <end position="68"/>
    </location>
</feature>
<feature type="transmembrane region" description="Helical" evidence="2">
    <location>
        <begin position="69"/>
        <end position="88"/>
    </location>
</feature>
<feature type="topological domain" description="Extracellular" evidence="2">
    <location>
        <begin position="89"/>
        <end position="110"/>
    </location>
</feature>
<feature type="transmembrane region" description="Helical" evidence="2">
    <location>
        <begin position="111"/>
        <end position="128"/>
    </location>
</feature>
<feature type="topological domain" description="Cytoplasmic" evidence="2">
    <location>
        <begin position="129"/>
        <end position="159"/>
    </location>
</feature>
<feature type="transmembrane region" description="Helical" evidence="2">
    <location>
        <begin position="160"/>
        <end position="178"/>
    </location>
</feature>
<feature type="topological domain" description="Extracellular" evidence="2">
    <location>
        <begin position="179"/>
        <end position="196"/>
    </location>
</feature>
<feature type="transmembrane region" description="Helical" evidence="2">
    <location>
        <begin position="197"/>
        <end position="215"/>
    </location>
</feature>
<feature type="topological domain" description="Cytoplasmic" evidence="2">
    <location>
        <begin position="216"/>
        <end position="241"/>
    </location>
</feature>
<feature type="transmembrane region" description="Helical" evidence="2">
    <location>
        <begin position="242"/>
        <end position="261"/>
    </location>
</feature>
<feature type="topological domain" description="Extracellular" evidence="2">
    <location>
        <begin position="262"/>
        <end position="284"/>
    </location>
</feature>
<feature type="transmembrane region" description="Helical" evidence="2">
    <location>
        <begin position="285"/>
        <end position="304"/>
    </location>
</feature>
<feature type="topological domain" description="Cytoplasmic" evidence="2">
    <location>
        <begin position="305"/>
        <end position="312"/>
    </location>
</feature>
<feature type="transmembrane region" description="Helical" evidence="2">
    <location>
        <begin position="313"/>
        <end position="331"/>
    </location>
</feature>
<feature type="topological domain" description="Extracellular" evidence="2">
    <location>
        <begin position="332"/>
        <end position="346"/>
    </location>
</feature>
<feature type="transmembrane region" description="Helical" evidence="2">
    <location>
        <begin position="347"/>
        <end position="366"/>
    </location>
</feature>
<feature type="topological domain" description="Cytoplasmic" evidence="2">
    <location>
        <begin position="367"/>
        <end position="374"/>
    </location>
</feature>
<feature type="transmembrane region" description="Helical" evidence="2">
    <location>
        <begin position="375"/>
        <end position="394"/>
    </location>
</feature>
<feature type="topological domain" description="Extracellular" evidence="2">
    <location>
        <begin position="395"/>
        <end position="421"/>
    </location>
</feature>
<feature type="transmembrane region" description="Helical" evidence="2">
    <location>
        <begin position="422"/>
        <end position="441"/>
    </location>
</feature>
<feature type="topological domain" description="Cytoplasmic" evidence="2">
    <location>
        <begin position="442"/>
        <end position="459"/>
    </location>
</feature>
<feature type="transmembrane region" description="Helical" evidence="2">
    <location>
        <begin position="460"/>
        <end position="479"/>
    </location>
</feature>
<feature type="topological domain" description="Extracellular" evidence="2">
    <location>
        <begin position="480"/>
        <end position="552"/>
    </location>
</feature>
<feature type="transmembrane region" description="Helical" evidence="2">
    <location>
        <begin position="553"/>
        <end position="572"/>
    </location>
</feature>
<feature type="topological domain" description="Cytoplasmic" evidence="2">
    <location>
        <begin position="573"/>
        <end position="580"/>
    </location>
</feature>
<feature type="transmembrane region" description="Helical" evidence="2">
    <location>
        <begin position="581"/>
        <end position="604"/>
    </location>
</feature>
<feature type="topological domain" description="Cytoplasmic" evidence="2">
    <location>
        <begin position="605"/>
        <end position="622"/>
    </location>
</feature>
<feature type="binding site" description="axial binding residue" evidence="3">
    <location>
        <position position="73"/>
    </location>
    <ligand>
        <name>Fe(II)-heme a</name>
        <dbReference type="ChEBI" id="CHEBI:61715"/>
    </ligand>
    <ligandPart>
        <name>Fe</name>
        <dbReference type="ChEBI" id="CHEBI:18248"/>
    </ligandPart>
</feature>
<feature type="binding site" evidence="3">
    <location>
        <position position="249"/>
    </location>
    <ligand>
        <name>Cu cation</name>
        <dbReference type="ChEBI" id="CHEBI:23378"/>
        <label>B</label>
    </ligand>
</feature>
<feature type="binding site" evidence="3">
    <location>
        <position position="253"/>
    </location>
    <ligand>
        <name>Cu cation</name>
        <dbReference type="ChEBI" id="CHEBI:23378"/>
        <label>B</label>
    </ligand>
</feature>
<feature type="binding site" evidence="3">
    <location>
        <position position="298"/>
    </location>
    <ligand>
        <name>Cu cation</name>
        <dbReference type="ChEBI" id="CHEBI:23378"/>
        <label>B</label>
    </ligand>
</feature>
<feature type="binding site" evidence="3">
    <location>
        <position position="299"/>
    </location>
    <ligand>
        <name>Cu cation</name>
        <dbReference type="ChEBI" id="CHEBI:23378"/>
        <label>B</label>
    </ligand>
</feature>
<feature type="binding site" description="axial binding residue" evidence="3">
    <location>
        <position position="384"/>
    </location>
    <ligand>
        <name>heme a3</name>
        <dbReference type="ChEBI" id="CHEBI:83282"/>
    </ligand>
    <ligandPart>
        <name>Fe</name>
        <dbReference type="ChEBI" id="CHEBI:18248"/>
    </ligandPart>
</feature>
<feature type="binding site" description="axial binding residue" evidence="3">
    <location>
        <position position="386"/>
    </location>
    <ligand>
        <name>Fe(II)-heme a</name>
        <dbReference type="ChEBI" id="CHEBI:61715"/>
    </ligand>
    <ligandPart>
        <name>Fe</name>
        <dbReference type="ChEBI" id="CHEBI:18248"/>
    </ligandPart>
</feature>
<feature type="cross-link" description="1'-histidyl-3'-tyrosine (His-Tyr)" evidence="1">
    <location>
        <begin position="249"/>
        <end position="253"/>
    </location>
</feature>
<feature type="sequence conflict" description="In Ref. 2; CAB11343." evidence="3" ref="2">
    <original>G</original>
    <variation>H</variation>
    <location>
        <position position="120"/>
    </location>
</feature>
<feature type="sequence conflict" description="In Ref. 1; CAA38077." evidence="3" ref="1">
    <original>FV</original>
    <variation>SI</variation>
    <location>
        <begin position="155"/>
        <end position="156"/>
    </location>
</feature>
<feature type="sequence conflict" description="In Ref. 1; CAA38077." evidence="3" ref="1">
    <location>
        <position position="288"/>
    </location>
</feature>
<feature type="sequence conflict" description="In Ref. 1; CAA38077." evidence="3" ref="1">
    <original>A</original>
    <variation>R</variation>
    <location>
        <position position="474"/>
    </location>
</feature>
<evidence type="ECO:0000250" key="1"/>
<evidence type="ECO:0000255" key="2"/>
<evidence type="ECO:0000305" key="3"/>
<keyword id="KW-1003">Cell membrane</keyword>
<keyword id="KW-0186">Copper</keyword>
<keyword id="KW-0249">Electron transport</keyword>
<keyword id="KW-0349">Heme</keyword>
<keyword id="KW-0375">Hydrogen ion transport</keyword>
<keyword id="KW-0406">Ion transport</keyword>
<keyword id="KW-0408">Iron</keyword>
<keyword id="KW-0472">Membrane</keyword>
<keyword id="KW-0479">Metal-binding</keyword>
<keyword id="KW-1185">Reference proteome</keyword>
<keyword id="KW-0679">Respiratory chain</keyword>
<keyword id="KW-1278">Translocase</keyword>
<keyword id="KW-0812">Transmembrane</keyword>
<keyword id="KW-1133">Transmembrane helix</keyword>
<keyword id="KW-0813">Transport</keyword>
<accession>P24010</accession>
<accession>O34467</accession>
<organism>
    <name type="scientific">Bacillus subtilis (strain 168)</name>
    <dbReference type="NCBI Taxonomy" id="224308"/>
    <lineage>
        <taxon>Bacteria</taxon>
        <taxon>Bacillati</taxon>
        <taxon>Bacillota</taxon>
        <taxon>Bacilli</taxon>
        <taxon>Bacillales</taxon>
        <taxon>Bacillaceae</taxon>
        <taxon>Bacillus</taxon>
    </lineage>
</organism>
<comment type="function">
    <text>Cytochrome c oxidase is the component of the respiratory chain that catalyzes the reduction of oxygen to water. Subunits 1-3 form the functional core of the enzyme complex. Co I is the catalytic subunit of the enzyme. Electrons originating in cytochrome c are transferred via the copper A center of subunit 2 and heme a of subunit 1 to the bimetallic center formed by heme a3 and copper B. This cytochrome c oxidase shows proton pump activity across the membrane in addition to the electron transfer.</text>
</comment>
<comment type="catalytic activity">
    <reaction>
        <text>4 Fe(II)-[cytochrome c] + O2 + 8 H(+)(in) = 4 Fe(III)-[cytochrome c] + 2 H2O + 4 H(+)(out)</text>
        <dbReference type="Rhea" id="RHEA:11436"/>
        <dbReference type="Rhea" id="RHEA-COMP:10350"/>
        <dbReference type="Rhea" id="RHEA-COMP:14399"/>
        <dbReference type="ChEBI" id="CHEBI:15377"/>
        <dbReference type="ChEBI" id="CHEBI:15378"/>
        <dbReference type="ChEBI" id="CHEBI:15379"/>
        <dbReference type="ChEBI" id="CHEBI:29033"/>
        <dbReference type="ChEBI" id="CHEBI:29034"/>
        <dbReference type="EC" id="7.1.1.9"/>
    </reaction>
</comment>
<comment type="cofactor">
    <cofactor>
        <name>Cu(2+)</name>
        <dbReference type="ChEBI" id="CHEBI:29036"/>
    </cofactor>
    <text>Binds 1 copper B ion per subunit.</text>
</comment>
<comment type="cofactor">
    <cofactor>
        <name>heme</name>
        <dbReference type="ChEBI" id="CHEBI:30413"/>
    </cofactor>
    <text>Binds 2 heme groups per subunit.</text>
</comment>
<comment type="pathway">
    <text>Energy metabolism; oxidative phosphorylation.</text>
</comment>
<comment type="subcellular location">
    <subcellularLocation>
        <location>Cell membrane</location>
        <topology>Multi-pass membrane protein</topology>
    </subcellularLocation>
</comment>
<comment type="similarity">
    <text evidence="3">Belongs to the heme-copper respiratory oxidase family.</text>
</comment>
<proteinExistence type="inferred from homology"/>
<gene>
    <name type="primary">ctaD</name>
    <name type="ordered locus">BSU14900</name>
</gene>
<sequence length="622" mass="69028">MLNALTEKRTRGSMLWDYLTTVDHKKIAILYLVAGGFFFLVGGIEAMFIRIQLAKPENAFLSAQAYNEVMTMHGTTMIFLAAMPLLFALMNAVVPLQIGARDVSFPFLNALGFWLFFFGGIFLNLSWFLGGAPDAGWTSYASLSLHSKGHGIDFFVLGLQISGLGTLIAGINFLATIINMRAPGMTYMRLPLFTWTTFVASALILFAFPPLTVGLALMMLDRLFGTNFFNPELGGNTVIWEHLFWIFGHPEVYILILPAFGIFSEVIPVFARKRLFGYSSMVFAIVLIGFLGFMVWVHHMFTTGLGPIANAIFAVATMAIAIPTGIKIFNWLLTIWGGNVKYTTAMLYAVSFIPSFVLGGVTGVMLAAAAADYQFHDTYFVVAHFHYVIIGGVVFGLLAGVHFWWPKMFGKILHETMGKISFVLFFIGFHLTFFIQHFVGLMGMPRRVYTFLPGQGLETGNLISTIGAFFMAAAVILLLVNVIWTSVKGEYVGADPWHDGRTLEWTVSSPPPEYNFKQLPFVRGLDPLWIEKQAGHKSMTPAEPVDDIHMPNGSILPLIISFGLFVAAFGLLYRSDYAWGLPVIFIGLGITFITMLLRSVIDDHGYHIHKEELPNDDKGVKA</sequence>
<reference key="1">
    <citation type="journal article" date="1991" name="Eur. J. Biochem.">
        <title>The Bacillus subtilis cytochrome-c oxidase. Variations on a conserved protein theme.</title>
        <authorList>
            <person name="Saraste M."/>
            <person name="Metso T."/>
            <person name="Nakari T."/>
            <person name="Jalli T."/>
            <person name="Lauraeus M."/>
            <person name="van der Oost J."/>
        </authorList>
    </citation>
    <scope>NUCLEOTIDE SEQUENCE [GENOMIC DNA]</scope>
    <source>
        <strain>168</strain>
    </source>
</reference>
<reference key="2">
    <citation type="submission" date="1997-08" db="EMBL/GenBank/DDBJ databases">
        <title>Bacillus subtilis chromosomal region downstream nprE.</title>
        <authorList>
            <person name="Bertero M."/>
            <person name="Presecan E."/>
            <person name="Glaser P."/>
            <person name="Richou A."/>
            <person name="Danchin A."/>
        </authorList>
    </citation>
    <scope>NUCLEOTIDE SEQUENCE [GENOMIC DNA]</scope>
    <source>
        <strain>168</strain>
    </source>
</reference>
<reference key="3">
    <citation type="journal article" date="1997" name="Nature">
        <title>The complete genome sequence of the Gram-positive bacterium Bacillus subtilis.</title>
        <authorList>
            <person name="Kunst F."/>
            <person name="Ogasawara N."/>
            <person name="Moszer I."/>
            <person name="Albertini A.M."/>
            <person name="Alloni G."/>
            <person name="Azevedo V."/>
            <person name="Bertero M.G."/>
            <person name="Bessieres P."/>
            <person name="Bolotin A."/>
            <person name="Borchert S."/>
            <person name="Borriss R."/>
            <person name="Boursier L."/>
            <person name="Brans A."/>
            <person name="Braun M."/>
            <person name="Brignell S.C."/>
            <person name="Bron S."/>
            <person name="Brouillet S."/>
            <person name="Bruschi C.V."/>
            <person name="Caldwell B."/>
            <person name="Capuano V."/>
            <person name="Carter N.M."/>
            <person name="Choi S.-K."/>
            <person name="Codani J.-J."/>
            <person name="Connerton I.F."/>
            <person name="Cummings N.J."/>
            <person name="Daniel R.A."/>
            <person name="Denizot F."/>
            <person name="Devine K.M."/>
            <person name="Duesterhoeft A."/>
            <person name="Ehrlich S.D."/>
            <person name="Emmerson P.T."/>
            <person name="Entian K.-D."/>
            <person name="Errington J."/>
            <person name="Fabret C."/>
            <person name="Ferrari E."/>
            <person name="Foulger D."/>
            <person name="Fritz C."/>
            <person name="Fujita M."/>
            <person name="Fujita Y."/>
            <person name="Fuma S."/>
            <person name="Galizzi A."/>
            <person name="Galleron N."/>
            <person name="Ghim S.-Y."/>
            <person name="Glaser P."/>
            <person name="Goffeau A."/>
            <person name="Golightly E.J."/>
            <person name="Grandi G."/>
            <person name="Guiseppi G."/>
            <person name="Guy B.J."/>
            <person name="Haga K."/>
            <person name="Haiech J."/>
            <person name="Harwood C.R."/>
            <person name="Henaut A."/>
            <person name="Hilbert H."/>
            <person name="Holsappel S."/>
            <person name="Hosono S."/>
            <person name="Hullo M.-F."/>
            <person name="Itaya M."/>
            <person name="Jones L.-M."/>
            <person name="Joris B."/>
            <person name="Karamata D."/>
            <person name="Kasahara Y."/>
            <person name="Klaerr-Blanchard M."/>
            <person name="Klein C."/>
            <person name="Kobayashi Y."/>
            <person name="Koetter P."/>
            <person name="Koningstein G."/>
            <person name="Krogh S."/>
            <person name="Kumano M."/>
            <person name="Kurita K."/>
            <person name="Lapidus A."/>
            <person name="Lardinois S."/>
            <person name="Lauber J."/>
            <person name="Lazarevic V."/>
            <person name="Lee S.-M."/>
            <person name="Levine A."/>
            <person name="Liu H."/>
            <person name="Masuda S."/>
            <person name="Mauel C."/>
            <person name="Medigue C."/>
            <person name="Medina N."/>
            <person name="Mellado R.P."/>
            <person name="Mizuno M."/>
            <person name="Moestl D."/>
            <person name="Nakai S."/>
            <person name="Noback M."/>
            <person name="Noone D."/>
            <person name="O'Reilly M."/>
            <person name="Ogawa K."/>
            <person name="Ogiwara A."/>
            <person name="Oudega B."/>
            <person name="Park S.-H."/>
            <person name="Parro V."/>
            <person name="Pohl T.M."/>
            <person name="Portetelle D."/>
            <person name="Porwollik S."/>
            <person name="Prescott A.M."/>
            <person name="Presecan E."/>
            <person name="Pujic P."/>
            <person name="Purnelle B."/>
            <person name="Rapoport G."/>
            <person name="Rey M."/>
            <person name="Reynolds S."/>
            <person name="Rieger M."/>
            <person name="Rivolta C."/>
            <person name="Rocha E."/>
            <person name="Roche B."/>
            <person name="Rose M."/>
            <person name="Sadaie Y."/>
            <person name="Sato T."/>
            <person name="Scanlan E."/>
            <person name="Schleich S."/>
            <person name="Schroeter R."/>
            <person name="Scoffone F."/>
            <person name="Sekiguchi J."/>
            <person name="Sekowska A."/>
            <person name="Seror S.J."/>
            <person name="Serror P."/>
            <person name="Shin B.-S."/>
            <person name="Soldo B."/>
            <person name="Sorokin A."/>
            <person name="Tacconi E."/>
            <person name="Takagi T."/>
            <person name="Takahashi H."/>
            <person name="Takemaru K."/>
            <person name="Takeuchi M."/>
            <person name="Tamakoshi A."/>
            <person name="Tanaka T."/>
            <person name="Terpstra P."/>
            <person name="Tognoni A."/>
            <person name="Tosato V."/>
            <person name="Uchiyama S."/>
            <person name="Vandenbol M."/>
            <person name="Vannier F."/>
            <person name="Vassarotti A."/>
            <person name="Viari A."/>
            <person name="Wambutt R."/>
            <person name="Wedler E."/>
            <person name="Wedler H."/>
            <person name="Weitzenegger T."/>
            <person name="Winters P."/>
            <person name="Wipat A."/>
            <person name="Yamamoto H."/>
            <person name="Yamane K."/>
            <person name="Yasumoto K."/>
            <person name="Yata K."/>
            <person name="Yoshida K."/>
            <person name="Yoshikawa H.-F."/>
            <person name="Zumstein E."/>
            <person name="Yoshikawa H."/>
            <person name="Danchin A."/>
        </authorList>
    </citation>
    <scope>NUCLEOTIDE SEQUENCE [LARGE SCALE GENOMIC DNA]</scope>
    <source>
        <strain>168</strain>
    </source>
</reference>
<reference key="4">
    <citation type="journal article" date="2009" name="Microbiology">
        <title>From a consortium sequence to a unified sequence: the Bacillus subtilis 168 reference genome a decade later.</title>
        <authorList>
            <person name="Barbe V."/>
            <person name="Cruveiller S."/>
            <person name="Kunst F."/>
            <person name="Lenoble P."/>
            <person name="Meurice G."/>
            <person name="Sekowska A."/>
            <person name="Vallenet D."/>
            <person name="Wang T."/>
            <person name="Moszer I."/>
            <person name="Medigue C."/>
            <person name="Danchin A."/>
        </authorList>
    </citation>
    <scope>SEQUENCE REVISION TO 120</scope>
</reference>
<protein>
    <recommendedName>
        <fullName>Cytochrome c oxidase subunit 1</fullName>
        <ecNumber>7.1.1.9</ecNumber>
    </recommendedName>
    <alternativeName>
        <fullName>Caa-3605 subunit 1</fullName>
    </alternativeName>
    <alternativeName>
        <fullName>Cytochrome aa3 subunit 1</fullName>
    </alternativeName>
    <alternativeName>
        <fullName>Cytochrome c oxidase polypeptide I</fullName>
    </alternativeName>
    <alternativeName>
        <fullName>Oxidase aa(3) subunit 1</fullName>
    </alternativeName>
</protein>
<dbReference type="EC" id="7.1.1.9"/>
<dbReference type="EMBL" id="X54140">
    <property type="protein sequence ID" value="CAA38077.1"/>
    <property type="molecule type" value="Genomic_DNA"/>
</dbReference>
<dbReference type="EMBL" id="Z98682">
    <property type="protein sequence ID" value="CAB11343.1"/>
    <property type="molecule type" value="Genomic_DNA"/>
</dbReference>
<dbReference type="EMBL" id="AL009126">
    <property type="protein sequence ID" value="CAB13363.2"/>
    <property type="molecule type" value="Genomic_DNA"/>
</dbReference>
<dbReference type="PIR" id="E69609">
    <property type="entry name" value="E69609"/>
</dbReference>
<dbReference type="RefSeq" id="NP_389373.2">
    <property type="nucleotide sequence ID" value="NC_000964.3"/>
</dbReference>
<dbReference type="RefSeq" id="WP_003232245.1">
    <property type="nucleotide sequence ID" value="NZ_OZ025638.1"/>
</dbReference>
<dbReference type="SMR" id="P24010"/>
<dbReference type="FunCoup" id="P24010">
    <property type="interactions" value="161"/>
</dbReference>
<dbReference type="STRING" id="224308.BSU14900"/>
<dbReference type="TCDB" id="3.D.4.4.1">
    <property type="family name" value="the proton-translocating cytochrome oxidase (cox) superfamily"/>
</dbReference>
<dbReference type="PaxDb" id="224308-BSU14900"/>
<dbReference type="EnsemblBacteria" id="CAB13363">
    <property type="protein sequence ID" value="CAB13363"/>
    <property type="gene ID" value="BSU_14900"/>
</dbReference>
<dbReference type="GeneID" id="936898"/>
<dbReference type="KEGG" id="bsu:BSU14900"/>
<dbReference type="PATRIC" id="fig|224308.179.peg.1625"/>
<dbReference type="eggNOG" id="COG0843">
    <property type="taxonomic scope" value="Bacteria"/>
</dbReference>
<dbReference type="InParanoid" id="P24010"/>
<dbReference type="OrthoDB" id="9759913at2"/>
<dbReference type="PhylomeDB" id="P24010"/>
<dbReference type="BioCyc" id="BSUB:BSU14900-MONOMER"/>
<dbReference type="BioCyc" id="MetaCyc:BSU14900-MONOMER"/>
<dbReference type="SABIO-RK" id="P24010"/>
<dbReference type="UniPathway" id="UPA00705"/>
<dbReference type="Proteomes" id="UP000001570">
    <property type="component" value="Chromosome"/>
</dbReference>
<dbReference type="GO" id="GO:0005886">
    <property type="term" value="C:plasma membrane"/>
    <property type="evidence" value="ECO:0007669"/>
    <property type="project" value="UniProtKB-SubCell"/>
</dbReference>
<dbReference type="GO" id="GO:0004129">
    <property type="term" value="F:cytochrome-c oxidase activity"/>
    <property type="evidence" value="ECO:0007669"/>
    <property type="project" value="UniProtKB-EC"/>
</dbReference>
<dbReference type="GO" id="GO:0020037">
    <property type="term" value="F:heme binding"/>
    <property type="evidence" value="ECO:0007669"/>
    <property type="project" value="InterPro"/>
</dbReference>
<dbReference type="GO" id="GO:0046872">
    <property type="term" value="F:metal ion binding"/>
    <property type="evidence" value="ECO:0007669"/>
    <property type="project" value="UniProtKB-KW"/>
</dbReference>
<dbReference type="GO" id="GO:0009060">
    <property type="term" value="P:aerobic respiration"/>
    <property type="evidence" value="ECO:0000318"/>
    <property type="project" value="GO_Central"/>
</dbReference>
<dbReference type="GO" id="GO:0015990">
    <property type="term" value="P:electron transport coupled proton transport"/>
    <property type="evidence" value="ECO:0000318"/>
    <property type="project" value="GO_Central"/>
</dbReference>
<dbReference type="GO" id="GO:0006119">
    <property type="term" value="P:oxidative phosphorylation"/>
    <property type="evidence" value="ECO:0007669"/>
    <property type="project" value="UniProtKB-UniPathway"/>
</dbReference>
<dbReference type="GO" id="GO:0022904">
    <property type="term" value="P:respiratory electron transport chain"/>
    <property type="evidence" value="ECO:0000318"/>
    <property type="project" value="GO_Central"/>
</dbReference>
<dbReference type="CDD" id="cd01662">
    <property type="entry name" value="Ubiquinol_Oxidase_I"/>
    <property type="match status" value="1"/>
</dbReference>
<dbReference type="FunFam" id="1.10.287.70:FF:000114">
    <property type="entry name" value="Cytochrome c oxidase subunit 1"/>
    <property type="match status" value="1"/>
</dbReference>
<dbReference type="FunFam" id="1.20.210.10:FF:000006">
    <property type="entry name" value="Cytochrome c oxidase subunit 1"/>
    <property type="match status" value="1"/>
</dbReference>
<dbReference type="Gene3D" id="1.10.287.70">
    <property type="match status" value="1"/>
</dbReference>
<dbReference type="Gene3D" id="1.20.210.10">
    <property type="entry name" value="Cytochrome c oxidase-like, subunit I domain"/>
    <property type="match status" value="1"/>
</dbReference>
<dbReference type="InterPro" id="IPR023616">
    <property type="entry name" value="Cyt_c_oxase-like_su1_dom"/>
</dbReference>
<dbReference type="InterPro" id="IPR036927">
    <property type="entry name" value="Cyt_c_oxase-like_su1_sf"/>
</dbReference>
<dbReference type="InterPro" id="IPR000883">
    <property type="entry name" value="Cyt_C_Oxase_1"/>
</dbReference>
<dbReference type="InterPro" id="IPR023615">
    <property type="entry name" value="Cyt_c_Oxase_su1_BS"/>
</dbReference>
<dbReference type="InterPro" id="IPR014241">
    <property type="entry name" value="Cyt_c_oxidase_su1_bac"/>
</dbReference>
<dbReference type="NCBIfam" id="TIGR02891">
    <property type="entry name" value="CtaD_CoxA"/>
    <property type="match status" value="1"/>
</dbReference>
<dbReference type="PANTHER" id="PTHR10422">
    <property type="entry name" value="CYTOCHROME C OXIDASE SUBUNIT 1"/>
    <property type="match status" value="1"/>
</dbReference>
<dbReference type="PANTHER" id="PTHR10422:SF44">
    <property type="entry name" value="CYTOCHROME C OXIDASE SUBUNIT 1"/>
    <property type="match status" value="1"/>
</dbReference>
<dbReference type="Pfam" id="PF00115">
    <property type="entry name" value="COX1"/>
    <property type="match status" value="1"/>
</dbReference>
<dbReference type="PRINTS" id="PR01165">
    <property type="entry name" value="CYCOXIDASEI"/>
</dbReference>
<dbReference type="SUPFAM" id="SSF81442">
    <property type="entry name" value="Cytochrome c oxidase subunit I-like"/>
    <property type="match status" value="1"/>
</dbReference>
<dbReference type="PROSITE" id="PS50855">
    <property type="entry name" value="COX1"/>
    <property type="match status" value="1"/>
</dbReference>
<dbReference type="PROSITE" id="PS00077">
    <property type="entry name" value="COX1_CUB"/>
    <property type="match status" value="1"/>
</dbReference>
<name>COX1_BACSU</name>